<reference key="1">
    <citation type="journal article" date="2009" name="PLoS ONE">
        <title>Genome sequence of the pathogenic intestinal spirochete Brachyspira hyodysenteriae reveals adaptations to its lifestyle in the porcine large intestine.</title>
        <authorList>
            <person name="Bellgard M.I."/>
            <person name="Wanchanthuek P."/>
            <person name="La T."/>
            <person name="Ryan K."/>
            <person name="Moolhuijzen P."/>
            <person name="Albertyn Z."/>
            <person name="Shaban B."/>
            <person name="Motro Y."/>
            <person name="Dunn D.S."/>
            <person name="Schibeci D."/>
            <person name="Hunter A."/>
            <person name="Barrero R."/>
            <person name="Phillips N.D."/>
            <person name="Hampson D.J."/>
        </authorList>
    </citation>
    <scope>NUCLEOTIDE SEQUENCE [LARGE SCALE GENOMIC DNA]</scope>
    <source>
        <strain>ATCC 49526 / WA1</strain>
    </source>
</reference>
<evidence type="ECO:0000255" key="1">
    <source>
        <dbReference type="HAMAP-Rule" id="MF_00082"/>
    </source>
</evidence>
<comment type="function">
    <text evidence="1">Catalyzes the ATP-dependent phosphorylation of N-acetyl-L-glutamate.</text>
</comment>
<comment type="catalytic activity">
    <reaction evidence="1">
        <text>N-acetyl-L-glutamate + ATP = N-acetyl-L-glutamyl 5-phosphate + ADP</text>
        <dbReference type="Rhea" id="RHEA:14629"/>
        <dbReference type="ChEBI" id="CHEBI:30616"/>
        <dbReference type="ChEBI" id="CHEBI:44337"/>
        <dbReference type="ChEBI" id="CHEBI:57936"/>
        <dbReference type="ChEBI" id="CHEBI:456216"/>
        <dbReference type="EC" id="2.7.2.8"/>
    </reaction>
</comment>
<comment type="pathway">
    <text evidence="1">Amino-acid biosynthesis; L-arginine biosynthesis; N(2)-acetyl-L-ornithine from L-glutamate: step 2/4.</text>
</comment>
<comment type="subcellular location">
    <subcellularLocation>
        <location evidence="1">Cytoplasm</location>
    </subcellularLocation>
</comment>
<comment type="similarity">
    <text evidence="1">Belongs to the acetylglutamate kinase family. ArgB subfamily.</text>
</comment>
<accession>C0QYU9</accession>
<sequence length="288" mass="31194">MENISNRDKALILNQALPYIQKYTGKTVVIKYGGSAMENPELKKKVMSDVALLSTVGINVIVVHGGGKDITAMLNKIGKESKFINGLRYTDSETAEVVKMVLAGKVNKDLVASLENCGGKCLGICGIDGKMFKVSKYKGDDDLGFVGDVDHVDTDLLNTIITNKYIPIVATIGCDDEGNVYNINADTAAARIAESLKAETLIYMTDTPGLLKDKDDENTLISQINIKDIDNLIKDGTISGGMIPKVKHCIDAVENGVSKVFIIDGRLCHSLLIEMFTDEGIGTMFHKD</sequence>
<gene>
    <name evidence="1" type="primary">argB</name>
    <name type="ordered locus">BHWA1_00541</name>
</gene>
<name>ARGB_BRAHW</name>
<protein>
    <recommendedName>
        <fullName evidence="1">Acetylglutamate kinase</fullName>
        <ecNumber evidence="1">2.7.2.8</ecNumber>
    </recommendedName>
    <alternativeName>
        <fullName evidence="1">N-acetyl-L-glutamate 5-phosphotransferase</fullName>
    </alternativeName>
    <alternativeName>
        <fullName evidence="1">NAG kinase</fullName>
        <shortName evidence="1">NAGK</shortName>
    </alternativeName>
</protein>
<proteinExistence type="inferred from homology"/>
<keyword id="KW-0028">Amino-acid biosynthesis</keyword>
<keyword id="KW-0055">Arginine biosynthesis</keyword>
<keyword id="KW-0067">ATP-binding</keyword>
<keyword id="KW-0963">Cytoplasm</keyword>
<keyword id="KW-0418">Kinase</keyword>
<keyword id="KW-0547">Nucleotide-binding</keyword>
<keyword id="KW-0808">Transferase</keyword>
<dbReference type="EC" id="2.7.2.8" evidence="1"/>
<dbReference type="EMBL" id="CP001357">
    <property type="protein sequence ID" value="ACN83037.1"/>
    <property type="molecule type" value="Genomic_DNA"/>
</dbReference>
<dbReference type="RefSeq" id="WP_012670088.1">
    <property type="nucleotide sequence ID" value="NC_012225.1"/>
</dbReference>
<dbReference type="SMR" id="C0QYU9"/>
<dbReference type="STRING" id="565034.BHWA1_00541"/>
<dbReference type="KEGG" id="bhy:BHWA1_00541"/>
<dbReference type="eggNOG" id="COG0548">
    <property type="taxonomic scope" value="Bacteria"/>
</dbReference>
<dbReference type="HOGENOM" id="CLU_053680_0_0_12"/>
<dbReference type="UniPathway" id="UPA00068">
    <property type="reaction ID" value="UER00107"/>
</dbReference>
<dbReference type="Proteomes" id="UP000001803">
    <property type="component" value="Chromosome"/>
</dbReference>
<dbReference type="GO" id="GO:0005737">
    <property type="term" value="C:cytoplasm"/>
    <property type="evidence" value="ECO:0007669"/>
    <property type="project" value="UniProtKB-SubCell"/>
</dbReference>
<dbReference type="GO" id="GO:0003991">
    <property type="term" value="F:acetylglutamate kinase activity"/>
    <property type="evidence" value="ECO:0007669"/>
    <property type="project" value="UniProtKB-UniRule"/>
</dbReference>
<dbReference type="GO" id="GO:0005524">
    <property type="term" value="F:ATP binding"/>
    <property type="evidence" value="ECO:0007669"/>
    <property type="project" value="UniProtKB-UniRule"/>
</dbReference>
<dbReference type="GO" id="GO:0042450">
    <property type="term" value="P:arginine biosynthetic process via ornithine"/>
    <property type="evidence" value="ECO:0007669"/>
    <property type="project" value="UniProtKB-UniRule"/>
</dbReference>
<dbReference type="GO" id="GO:0006526">
    <property type="term" value="P:L-arginine biosynthetic process"/>
    <property type="evidence" value="ECO:0007669"/>
    <property type="project" value="UniProtKB-UniPathway"/>
</dbReference>
<dbReference type="CDD" id="cd04250">
    <property type="entry name" value="AAK_NAGK-C"/>
    <property type="match status" value="1"/>
</dbReference>
<dbReference type="FunFam" id="3.40.1160.10:FF:000004">
    <property type="entry name" value="Acetylglutamate kinase"/>
    <property type="match status" value="1"/>
</dbReference>
<dbReference type="Gene3D" id="3.40.1160.10">
    <property type="entry name" value="Acetylglutamate kinase-like"/>
    <property type="match status" value="1"/>
</dbReference>
<dbReference type="HAMAP" id="MF_00082">
    <property type="entry name" value="ArgB"/>
    <property type="match status" value="1"/>
</dbReference>
<dbReference type="InterPro" id="IPR036393">
    <property type="entry name" value="AceGlu_kinase-like_sf"/>
</dbReference>
<dbReference type="InterPro" id="IPR004662">
    <property type="entry name" value="AcgluKinase_fam"/>
</dbReference>
<dbReference type="InterPro" id="IPR037528">
    <property type="entry name" value="ArgB"/>
</dbReference>
<dbReference type="InterPro" id="IPR001048">
    <property type="entry name" value="Asp/Glu/Uridylate_kinase"/>
</dbReference>
<dbReference type="InterPro" id="IPR001057">
    <property type="entry name" value="Glu/AcGlu_kinase"/>
</dbReference>
<dbReference type="InterPro" id="IPR041727">
    <property type="entry name" value="NAGK-C"/>
</dbReference>
<dbReference type="NCBIfam" id="TIGR00761">
    <property type="entry name" value="argB"/>
    <property type="match status" value="1"/>
</dbReference>
<dbReference type="PANTHER" id="PTHR23342">
    <property type="entry name" value="N-ACETYLGLUTAMATE SYNTHASE"/>
    <property type="match status" value="1"/>
</dbReference>
<dbReference type="PANTHER" id="PTHR23342:SF0">
    <property type="entry name" value="N-ACETYLGLUTAMATE SYNTHASE, MITOCHONDRIAL"/>
    <property type="match status" value="1"/>
</dbReference>
<dbReference type="Pfam" id="PF00696">
    <property type="entry name" value="AA_kinase"/>
    <property type="match status" value="1"/>
</dbReference>
<dbReference type="PIRSF" id="PIRSF000728">
    <property type="entry name" value="NAGK"/>
    <property type="match status" value="1"/>
</dbReference>
<dbReference type="PRINTS" id="PR00474">
    <property type="entry name" value="GLU5KINASE"/>
</dbReference>
<dbReference type="SUPFAM" id="SSF53633">
    <property type="entry name" value="Carbamate kinase-like"/>
    <property type="match status" value="1"/>
</dbReference>
<feature type="chain" id="PRO_1000118340" description="Acetylglutamate kinase">
    <location>
        <begin position="1"/>
        <end position="288"/>
    </location>
</feature>
<feature type="binding site" evidence="1">
    <location>
        <begin position="66"/>
        <end position="67"/>
    </location>
    <ligand>
        <name>substrate</name>
    </ligand>
</feature>
<feature type="binding site" evidence="1">
    <location>
        <position position="88"/>
    </location>
    <ligand>
        <name>substrate</name>
    </ligand>
</feature>
<feature type="binding site" evidence="1">
    <location>
        <position position="182"/>
    </location>
    <ligand>
        <name>substrate</name>
    </ligand>
</feature>
<feature type="site" description="Transition state stabilizer" evidence="1">
    <location>
        <position position="31"/>
    </location>
</feature>
<feature type="site" description="Transition state stabilizer" evidence="1">
    <location>
        <position position="245"/>
    </location>
</feature>
<organism>
    <name type="scientific">Brachyspira hyodysenteriae (strain ATCC 49526 / WA1)</name>
    <dbReference type="NCBI Taxonomy" id="565034"/>
    <lineage>
        <taxon>Bacteria</taxon>
        <taxon>Pseudomonadati</taxon>
        <taxon>Spirochaetota</taxon>
        <taxon>Spirochaetia</taxon>
        <taxon>Brachyspirales</taxon>
        <taxon>Brachyspiraceae</taxon>
        <taxon>Brachyspira</taxon>
    </lineage>
</organism>